<keyword id="KW-0002">3D-structure</keyword>
<keyword id="KW-0210">Decarboxylase</keyword>
<keyword id="KW-0903">Direct protein sequencing</keyword>
<keyword id="KW-0456">Lyase</keyword>
<keyword id="KW-0663">Pyridoxal phosphate</keyword>
<comment type="function">
    <text>The dialkylglycine decarboxylase is of interest because it normally catalyzes both decarboxylation and amino transfer. It may be more properly described as a decarboxylating aminotransferase rather than an aminotransferring decarboxylase.</text>
</comment>
<comment type="catalytic activity">
    <reaction>
        <text>2,2-dialkylglycine + pyruvate + H(+) = dialkyl ketone + L-alanine + CO2</text>
        <dbReference type="Rhea" id="RHEA:16073"/>
        <dbReference type="ChEBI" id="CHEBI:15361"/>
        <dbReference type="ChEBI" id="CHEBI:15378"/>
        <dbReference type="ChEBI" id="CHEBI:16526"/>
        <dbReference type="ChEBI" id="CHEBI:18044"/>
        <dbReference type="ChEBI" id="CHEBI:57689"/>
        <dbReference type="ChEBI" id="CHEBI:57972"/>
        <dbReference type="EC" id="4.1.1.64"/>
    </reaction>
</comment>
<comment type="cofactor">
    <cofactor>
        <name>pyridoxal 5'-phosphate</name>
        <dbReference type="ChEBI" id="CHEBI:597326"/>
    </cofactor>
</comment>
<comment type="subunit">
    <text>Homotetramer.</text>
</comment>
<comment type="miscellaneous">
    <text>The enzyme may have evolved to use the rare dialkylglycines of cosmic origin, or it may be part of a metabolic pathway for breaking down cytotoxic peptides and the constituent amino acids.</text>
</comment>
<comment type="similarity">
    <text evidence="2">Belongs to the class-III pyridoxal-phosphate-dependent aminotransferase family.</text>
</comment>
<organism>
    <name type="scientific">Burkholderia cepacia</name>
    <name type="common">Pseudomonas cepacia</name>
    <dbReference type="NCBI Taxonomy" id="292"/>
    <lineage>
        <taxon>Bacteria</taxon>
        <taxon>Pseudomonadati</taxon>
        <taxon>Pseudomonadota</taxon>
        <taxon>Betaproteobacteria</taxon>
        <taxon>Burkholderiales</taxon>
        <taxon>Burkholderiaceae</taxon>
        <taxon>Burkholderia</taxon>
        <taxon>Burkholderia cepacia complex</taxon>
    </lineage>
</organism>
<evidence type="ECO:0000269" key="1">
    <source>
    </source>
</evidence>
<evidence type="ECO:0000305" key="2"/>
<evidence type="ECO:0007829" key="3">
    <source>
        <dbReference type="PDB" id="1D7U"/>
    </source>
</evidence>
<evidence type="ECO:0007829" key="4">
    <source>
        <dbReference type="PDB" id="1M0O"/>
    </source>
</evidence>
<evidence type="ECO:0007829" key="5">
    <source>
        <dbReference type="PDB" id="1ZOB"/>
    </source>
</evidence>
<evidence type="ECO:0007829" key="6">
    <source>
        <dbReference type="PDB" id="1ZOD"/>
    </source>
</evidence>
<dbReference type="EC" id="4.1.1.64"/>
<dbReference type="EMBL" id="J05282">
    <property type="protein sequence ID" value="AAA50844.1"/>
    <property type="molecule type" value="Genomic_DNA"/>
</dbReference>
<dbReference type="PIR" id="A35173">
    <property type="entry name" value="A35173"/>
</dbReference>
<dbReference type="PDB" id="1D7R">
    <property type="method" value="X-ray"/>
    <property type="resolution" value="2.00 A"/>
    <property type="chains" value="A=1-433"/>
</dbReference>
<dbReference type="PDB" id="1D7S">
    <property type="method" value="X-ray"/>
    <property type="resolution" value="2.05 A"/>
    <property type="chains" value="A=1-433"/>
</dbReference>
<dbReference type="PDB" id="1D7U">
    <property type="method" value="X-ray"/>
    <property type="resolution" value="1.95 A"/>
    <property type="chains" value="A=1-433"/>
</dbReference>
<dbReference type="PDB" id="1D7V">
    <property type="method" value="X-ray"/>
    <property type="resolution" value="2.80 A"/>
    <property type="chains" value="A=1-433"/>
</dbReference>
<dbReference type="PDB" id="1DGD">
    <property type="method" value="X-ray"/>
    <property type="resolution" value="2.80 A"/>
    <property type="chains" value="A=2-433"/>
</dbReference>
<dbReference type="PDB" id="1DGE">
    <property type="method" value="X-ray"/>
    <property type="resolution" value="2.80 A"/>
    <property type="chains" value="A=2-433"/>
</dbReference>
<dbReference type="PDB" id="1DKA">
    <property type="method" value="X-ray"/>
    <property type="resolution" value="2.60 A"/>
    <property type="chains" value="A=1-433"/>
</dbReference>
<dbReference type="PDB" id="1M0N">
    <property type="method" value="X-ray"/>
    <property type="resolution" value="2.20 A"/>
    <property type="chains" value="A=1-433"/>
</dbReference>
<dbReference type="PDB" id="1M0O">
    <property type="method" value="X-ray"/>
    <property type="resolution" value="2.40 A"/>
    <property type="chains" value="A=1-433"/>
</dbReference>
<dbReference type="PDB" id="1M0P">
    <property type="method" value="X-ray"/>
    <property type="resolution" value="2.60 A"/>
    <property type="chains" value="A=1-433"/>
</dbReference>
<dbReference type="PDB" id="1M0Q">
    <property type="method" value="X-ray"/>
    <property type="resolution" value="2.00 A"/>
    <property type="chains" value="A=1-433"/>
</dbReference>
<dbReference type="PDB" id="1Z3Z">
    <property type="method" value="X-ray"/>
    <property type="resolution" value="2.90 A"/>
    <property type="chains" value="A=3-433"/>
</dbReference>
<dbReference type="PDB" id="1ZC9">
    <property type="method" value="X-ray"/>
    <property type="resolution" value="2.00 A"/>
    <property type="chains" value="A=1-433"/>
</dbReference>
<dbReference type="PDB" id="1ZOB">
    <property type="method" value="X-ray"/>
    <property type="resolution" value="2.75 A"/>
    <property type="chains" value="A=1-433"/>
</dbReference>
<dbReference type="PDB" id="1ZOD">
    <property type="method" value="X-ray"/>
    <property type="resolution" value="1.80 A"/>
    <property type="chains" value="A=1-433"/>
</dbReference>
<dbReference type="PDB" id="2DKB">
    <property type="method" value="X-ray"/>
    <property type="resolution" value="2.10 A"/>
    <property type="chains" value="A=1-433"/>
</dbReference>
<dbReference type="PDBsum" id="1D7R"/>
<dbReference type="PDBsum" id="1D7S"/>
<dbReference type="PDBsum" id="1D7U"/>
<dbReference type="PDBsum" id="1D7V"/>
<dbReference type="PDBsum" id="1DGD"/>
<dbReference type="PDBsum" id="1DGE"/>
<dbReference type="PDBsum" id="1DKA"/>
<dbReference type="PDBsum" id="1M0N"/>
<dbReference type="PDBsum" id="1M0O"/>
<dbReference type="PDBsum" id="1M0P"/>
<dbReference type="PDBsum" id="1M0Q"/>
<dbReference type="PDBsum" id="1Z3Z"/>
<dbReference type="PDBsum" id="1ZC9"/>
<dbReference type="PDBsum" id="1ZOB"/>
<dbReference type="PDBsum" id="1ZOD"/>
<dbReference type="PDBsum" id="2DKB"/>
<dbReference type="SMR" id="P16932"/>
<dbReference type="STRING" id="292.WI67_29060"/>
<dbReference type="DrugBank" id="DB03787">
    <property type="generic name" value="(5-Hydroxy-6-methyl-4-{[(E)-(3-oxo-1,2-oxazolidin-4-ylidene)amino]methyl}-3-pyridinyl)methyl dihydrogen phosphate"/>
</dbReference>
<dbReference type="DrugBank" id="DB02038">
    <property type="generic name" value="D-[3-hydroxy-2-methyl-5-phosphonooxymethyl-pyridin-4-ylmethyl]-N,O-cycloserylamide"/>
</dbReference>
<dbReference type="DrugBank" id="DB02849">
    <property type="generic name" value="N-Pyridoxyl-1-Amino-Cyclopropanecarboxylic Acid-5-Monophosphate"/>
</dbReference>
<dbReference type="DrugBank" id="DB04241">
    <property type="generic name" value="N-Pyridoxyl-2-Methylalanine-5-Phosphate"/>
</dbReference>
<dbReference type="KEGG" id="ag:AAA50844"/>
<dbReference type="eggNOG" id="COG0160">
    <property type="taxonomic scope" value="Bacteria"/>
</dbReference>
<dbReference type="BRENDA" id="4.1.1.64">
    <property type="organism ID" value="1028"/>
</dbReference>
<dbReference type="SABIO-RK" id="P16932"/>
<dbReference type="EvolutionaryTrace" id="P16932"/>
<dbReference type="GO" id="GO:0047432">
    <property type="term" value="F:2,2-dialkylglycine decarboxylase (pyruvate) activity"/>
    <property type="evidence" value="ECO:0007669"/>
    <property type="project" value="UniProtKB-EC"/>
</dbReference>
<dbReference type="GO" id="GO:0030170">
    <property type="term" value="F:pyridoxal phosphate binding"/>
    <property type="evidence" value="ECO:0007669"/>
    <property type="project" value="InterPro"/>
</dbReference>
<dbReference type="GO" id="GO:0008483">
    <property type="term" value="F:transaminase activity"/>
    <property type="evidence" value="ECO:0007669"/>
    <property type="project" value="InterPro"/>
</dbReference>
<dbReference type="CDD" id="cd00610">
    <property type="entry name" value="OAT_like"/>
    <property type="match status" value="1"/>
</dbReference>
<dbReference type="Gene3D" id="3.90.1150.10">
    <property type="entry name" value="Aspartate Aminotransferase, domain 1"/>
    <property type="match status" value="1"/>
</dbReference>
<dbReference type="Gene3D" id="3.40.640.10">
    <property type="entry name" value="Type I PLP-dependent aspartate aminotransferase-like (Major domain)"/>
    <property type="match status" value="1"/>
</dbReference>
<dbReference type="InterPro" id="IPR005814">
    <property type="entry name" value="Aminotrans_3"/>
</dbReference>
<dbReference type="InterPro" id="IPR049704">
    <property type="entry name" value="Aminotrans_3_PPA_site"/>
</dbReference>
<dbReference type="InterPro" id="IPR015424">
    <property type="entry name" value="PyrdxlP-dep_Trfase"/>
</dbReference>
<dbReference type="InterPro" id="IPR015421">
    <property type="entry name" value="PyrdxlP-dep_Trfase_major"/>
</dbReference>
<dbReference type="InterPro" id="IPR015422">
    <property type="entry name" value="PyrdxlP-dep_Trfase_small"/>
</dbReference>
<dbReference type="PANTHER" id="PTHR45688">
    <property type="match status" value="1"/>
</dbReference>
<dbReference type="PANTHER" id="PTHR45688:SF13">
    <property type="entry name" value="ALANINE--GLYOXYLATE AMINOTRANSFERASE 2-LIKE"/>
    <property type="match status" value="1"/>
</dbReference>
<dbReference type="Pfam" id="PF00202">
    <property type="entry name" value="Aminotran_3"/>
    <property type="match status" value="1"/>
</dbReference>
<dbReference type="PIRSF" id="PIRSF000521">
    <property type="entry name" value="Transaminase_4ab_Lys_Orn"/>
    <property type="match status" value="1"/>
</dbReference>
<dbReference type="SUPFAM" id="SSF53383">
    <property type="entry name" value="PLP-dependent transferases"/>
    <property type="match status" value="1"/>
</dbReference>
<dbReference type="PROSITE" id="PS00600">
    <property type="entry name" value="AA_TRANSFER_CLASS_3"/>
    <property type="match status" value="1"/>
</dbReference>
<gene>
    <name type="primary">dgdA</name>
</gene>
<accession>P16932</accession>
<feature type="initiator methionine" description="Removed" evidence="1">
    <location>
        <position position="1"/>
    </location>
</feature>
<feature type="chain" id="PRO_0000120509" description="2,2-dialkylglycine decarboxylase">
    <location>
        <begin position="2"/>
        <end position="433"/>
    </location>
</feature>
<feature type="modified residue" description="N6-(pyridoxal phosphate)lysine">
    <location>
        <position position="272"/>
    </location>
</feature>
<feature type="helix" evidence="6">
    <location>
        <begin position="7"/>
        <end position="16"/>
    </location>
</feature>
<feature type="strand" evidence="6">
    <location>
        <begin position="31"/>
        <end position="34"/>
    </location>
</feature>
<feature type="strand" evidence="6">
    <location>
        <begin position="36"/>
        <end position="38"/>
    </location>
</feature>
<feature type="strand" evidence="6">
    <location>
        <begin position="44"/>
        <end position="47"/>
    </location>
</feature>
<feature type="helix" evidence="6">
    <location>
        <begin position="50"/>
        <end position="53"/>
    </location>
</feature>
<feature type="helix" evidence="6">
    <location>
        <begin position="62"/>
        <end position="74"/>
    </location>
</feature>
<feature type="helix" evidence="6">
    <location>
        <begin position="85"/>
        <end position="97"/>
    </location>
</feature>
<feature type="strand" evidence="6">
    <location>
        <begin position="104"/>
        <end position="109"/>
    </location>
</feature>
<feature type="helix" evidence="6">
    <location>
        <begin position="111"/>
        <end position="126"/>
    </location>
</feature>
<feature type="strand" evidence="6">
    <location>
        <begin position="130"/>
        <end position="134"/>
    </location>
</feature>
<feature type="helix" evidence="6">
    <location>
        <begin position="143"/>
        <end position="147"/>
    </location>
</feature>
<feature type="strand" evidence="5">
    <location>
        <begin position="151"/>
        <end position="153"/>
    </location>
</feature>
<feature type="strand" evidence="6">
    <location>
        <begin position="155"/>
        <end position="157"/>
    </location>
</feature>
<feature type="strand" evidence="6">
    <location>
        <begin position="164"/>
        <end position="167"/>
    </location>
</feature>
<feature type="strand" evidence="3">
    <location>
        <begin position="172"/>
        <end position="174"/>
    </location>
</feature>
<feature type="strand" evidence="3">
    <location>
        <begin position="178"/>
        <end position="183"/>
    </location>
</feature>
<feature type="helix" evidence="6">
    <location>
        <begin position="185"/>
        <end position="199"/>
    </location>
</feature>
<feature type="strand" evidence="6">
    <location>
        <begin position="204"/>
        <end position="209"/>
    </location>
</feature>
<feature type="strand" evidence="6">
    <location>
        <begin position="211"/>
        <end position="213"/>
    </location>
</feature>
<feature type="turn" evidence="6">
    <location>
        <begin position="214"/>
        <end position="217"/>
    </location>
</feature>
<feature type="strand" evidence="3">
    <location>
        <begin position="218"/>
        <end position="220"/>
    </location>
</feature>
<feature type="helix" evidence="6">
    <location>
        <begin position="225"/>
        <end position="235"/>
    </location>
</feature>
<feature type="strand" evidence="6">
    <location>
        <begin position="239"/>
        <end position="243"/>
    </location>
</feature>
<feature type="turn" evidence="6">
    <location>
        <begin position="245"/>
        <end position="252"/>
    </location>
</feature>
<feature type="strand" evidence="6">
    <location>
        <begin position="253"/>
        <end position="256"/>
    </location>
</feature>
<feature type="helix" evidence="6">
    <location>
        <begin position="258"/>
        <end position="261"/>
    </location>
</feature>
<feature type="strand" evidence="6">
    <location>
        <begin position="266"/>
        <end position="270"/>
    </location>
</feature>
<feature type="helix" evidence="6">
    <location>
        <begin position="272"/>
        <end position="275"/>
    </location>
</feature>
<feature type="strand" evidence="6">
    <location>
        <begin position="281"/>
        <end position="285"/>
    </location>
</feature>
<feature type="helix" evidence="6">
    <location>
        <begin position="287"/>
        <end position="295"/>
    </location>
</feature>
<feature type="turn" evidence="6">
    <location>
        <begin position="303"/>
        <end position="306"/>
    </location>
</feature>
<feature type="helix" evidence="6">
    <location>
        <begin position="308"/>
        <end position="323"/>
    </location>
</feature>
<feature type="helix" evidence="6">
    <location>
        <begin position="326"/>
        <end position="347"/>
    </location>
</feature>
<feature type="strand" evidence="6">
    <location>
        <begin position="351"/>
        <end position="357"/>
    </location>
</feature>
<feature type="strand" evidence="6">
    <location>
        <begin position="360"/>
        <end position="368"/>
    </location>
</feature>
<feature type="turn" evidence="6">
    <location>
        <begin position="369"/>
        <end position="372"/>
    </location>
</feature>
<feature type="helix" evidence="6">
    <location>
        <begin position="378"/>
        <end position="388"/>
    </location>
</feature>
<feature type="strand" evidence="4">
    <location>
        <begin position="395"/>
        <end position="397"/>
    </location>
</feature>
<feature type="strand" evidence="6">
    <location>
        <begin position="404"/>
        <end position="407"/>
    </location>
</feature>
<feature type="helix" evidence="6">
    <location>
        <begin position="415"/>
        <end position="432"/>
    </location>
</feature>
<reference key="1">
    <citation type="journal article" date="1990" name="J. Biol. Chem.">
        <title>Pseudomonas cepacia 2,2-dialkylglycine decarboxylase. Sequence and expression in Escherichia coli of structural and repressor genes.</title>
        <authorList>
            <person name="Keller J.W."/>
            <person name="Baurick K.B."/>
            <person name="Rutt G.C."/>
            <person name="O'Malley M.V."/>
            <person name="Sonafrank N.L."/>
            <person name="Reynolds R.A."/>
            <person name="Ebbesson L.O.E."/>
            <person name="Vajdos F.F."/>
        </authorList>
    </citation>
    <scope>NUCLEOTIDE SEQUENCE [GENOMIC DNA]</scope>
    <scope>PROTEIN SEQUENCE OF 2-20 AND 261-276</scope>
</reference>
<reference key="2">
    <citation type="journal article" date="1993" name="Science">
        <title>Dialkylglycine decarboxylase structure: bifunctional active site and alkali metal sites.</title>
        <authorList>
            <person name="Toney M.D."/>
            <person name="Hohenester E."/>
            <person name="Cowan S.W."/>
            <person name="Jansonius J.N."/>
        </authorList>
    </citation>
    <scope>X-RAY CRYSTALLOGRAPHY (2.1 ANGSTROMS)</scope>
</reference>
<reference key="3">
    <citation type="journal article" date="1994" name="Biochemistry">
        <title>An alkali metal ion size-dependent switch in the active site structure of dialkylglycine decarboxylase.</title>
        <authorList>
            <person name="Hohenester E."/>
            <person name="Keller J.W."/>
            <person name="Jansonius J.N."/>
        </authorList>
    </citation>
    <scope>X-RAY CRYSTALLOGRAPHY (2.8 ANGSTROMS)</scope>
    <scope>SEQUENCE REVISION TO 52; 82-83 AND 308-312</scope>
</reference>
<reference key="4">
    <citation type="journal article" date="1995" name="J. Mol. Biol.">
        <title>Structural and mechanistic analysis of two refined crystal structures of the pyridoxal phosphate-dependent enzyme dialkylglycine decarboxylase.</title>
        <authorList>
            <person name="Toney M.D."/>
            <person name="Hohenester E."/>
            <person name="Keller J.W."/>
            <person name="Jansonius J.N."/>
        </authorList>
    </citation>
    <scope>X-RAY CRYSTALLOGRAPHY (2.8 ANGSTROMS)</scope>
</reference>
<reference key="5">
    <citation type="journal article" date="1999" name="J. Mol. Biol.">
        <title>Crystal structures of dialkylglycine decarboxylase inhibitor complexes.</title>
        <authorList>
            <person name="Malashkevich V.N."/>
            <person name="Strop P."/>
            <person name="Keller J.W."/>
            <person name="Jansonius J.N."/>
            <person name="Toney M.D."/>
        </authorList>
    </citation>
    <scope>X-RAY CRYSTALLOGRAPHY (2.0 ANGSTROMS)</scope>
</reference>
<name>DGDA_BURCE</name>
<sequence>MSLNDDATFWRNARQHLVRYGGTFEPMIIERAKGSFVYDADGRAILDFTSGQMSAVLGHCHPEIVSVIGEYAGKLDHLFSGMLSRPVVDLATRLANITPPGLDRALLLSTGAESNEAAIRMAKLVTGKYEIVGFAQSWHGMTGAAASATYSAGRKGVGPAAVGSFAIPAPFTYRPRFERNGAYDYLAELDYAFDLIDRQSSGNLAAFIAEPILSSGGIIELPDGYMAALKRKCEARGMLLILDEAQTGVGRTGTMFACQRDGVTPDILTLSKTLGAGLPLAAIVTSAAIEERAHELGYLFYTTHVSDPLPAAVGLRVLDVVQRDGLVARANVMGDRLRRGLLDLMERFDCIGDVRGRGLLLGVEIVKDRRTKEPADGLGAKITRECMNLGLSMNIVQLPGMGGVFRIAPPLTVSEDEIDLGLSLLGQAIERAL</sequence>
<protein>
    <recommendedName>
        <fullName>2,2-dialkylglycine decarboxylase</fullName>
        <shortName>DGD</shortName>
        <ecNumber>4.1.1.64</ecNumber>
    </recommendedName>
</protein>
<proteinExistence type="evidence at protein level"/>